<feature type="chain" id="PRO_0000176122" description="Uracil-DNA glycosylase">
    <location>
        <begin position="1"/>
        <end position="219"/>
    </location>
</feature>
<feature type="active site" description="Proton acceptor" evidence="1">
    <location>
        <position position="61"/>
    </location>
</feature>
<dbReference type="EC" id="3.2.2.27" evidence="1"/>
<dbReference type="EMBL" id="AE002098">
    <property type="protein sequence ID" value="AAF41604.1"/>
    <property type="molecule type" value="Genomic_DNA"/>
</dbReference>
<dbReference type="PIR" id="H81107">
    <property type="entry name" value="H81107"/>
</dbReference>
<dbReference type="RefSeq" id="NP_274247.1">
    <property type="nucleotide sequence ID" value="NC_003112.2"/>
</dbReference>
<dbReference type="RefSeq" id="WP_002224520.1">
    <property type="nucleotide sequence ID" value="NC_003112.2"/>
</dbReference>
<dbReference type="SMR" id="Q9JZA1"/>
<dbReference type="FunCoup" id="Q9JZA1">
    <property type="interactions" value="312"/>
</dbReference>
<dbReference type="STRING" id="122586.NMB1222"/>
<dbReference type="PaxDb" id="122586-NMB1222"/>
<dbReference type="KEGG" id="nme:NMB1222"/>
<dbReference type="PATRIC" id="fig|122586.8.peg.1526"/>
<dbReference type="HOGENOM" id="CLU_032162_3_0_4"/>
<dbReference type="InParanoid" id="Q9JZA1"/>
<dbReference type="OrthoDB" id="9804372at2"/>
<dbReference type="Proteomes" id="UP000000425">
    <property type="component" value="Chromosome"/>
</dbReference>
<dbReference type="GO" id="GO:0005737">
    <property type="term" value="C:cytoplasm"/>
    <property type="evidence" value="ECO:0007669"/>
    <property type="project" value="UniProtKB-SubCell"/>
</dbReference>
<dbReference type="GO" id="GO:0004844">
    <property type="term" value="F:uracil DNA N-glycosylase activity"/>
    <property type="evidence" value="ECO:0007669"/>
    <property type="project" value="UniProtKB-UniRule"/>
</dbReference>
<dbReference type="GO" id="GO:0097510">
    <property type="term" value="P:base-excision repair, AP site formation via deaminated base removal"/>
    <property type="evidence" value="ECO:0000318"/>
    <property type="project" value="GO_Central"/>
</dbReference>
<dbReference type="CDD" id="cd10027">
    <property type="entry name" value="UDG-F1-like"/>
    <property type="match status" value="1"/>
</dbReference>
<dbReference type="FunFam" id="3.40.470.10:FF:000001">
    <property type="entry name" value="Uracil-DNA glycosylase"/>
    <property type="match status" value="1"/>
</dbReference>
<dbReference type="Gene3D" id="3.40.470.10">
    <property type="entry name" value="Uracil-DNA glycosylase-like domain"/>
    <property type="match status" value="1"/>
</dbReference>
<dbReference type="HAMAP" id="MF_00148">
    <property type="entry name" value="UDG"/>
    <property type="match status" value="1"/>
</dbReference>
<dbReference type="InterPro" id="IPR002043">
    <property type="entry name" value="UDG_fam1"/>
</dbReference>
<dbReference type="InterPro" id="IPR018085">
    <property type="entry name" value="Ura-DNA_Glyclase_AS"/>
</dbReference>
<dbReference type="InterPro" id="IPR005122">
    <property type="entry name" value="Uracil-DNA_glycosylase-like"/>
</dbReference>
<dbReference type="InterPro" id="IPR036895">
    <property type="entry name" value="Uracil-DNA_glycosylase-like_sf"/>
</dbReference>
<dbReference type="NCBIfam" id="NF003588">
    <property type="entry name" value="PRK05254.1-1"/>
    <property type="match status" value="1"/>
</dbReference>
<dbReference type="NCBIfam" id="NF003589">
    <property type="entry name" value="PRK05254.1-2"/>
    <property type="match status" value="1"/>
</dbReference>
<dbReference type="NCBIfam" id="NF003591">
    <property type="entry name" value="PRK05254.1-4"/>
    <property type="match status" value="1"/>
</dbReference>
<dbReference type="NCBIfam" id="NF003592">
    <property type="entry name" value="PRK05254.1-5"/>
    <property type="match status" value="1"/>
</dbReference>
<dbReference type="NCBIfam" id="TIGR00628">
    <property type="entry name" value="ung"/>
    <property type="match status" value="1"/>
</dbReference>
<dbReference type="PANTHER" id="PTHR11264">
    <property type="entry name" value="URACIL-DNA GLYCOSYLASE"/>
    <property type="match status" value="1"/>
</dbReference>
<dbReference type="PANTHER" id="PTHR11264:SF0">
    <property type="entry name" value="URACIL-DNA GLYCOSYLASE"/>
    <property type="match status" value="1"/>
</dbReference>
<dbReference type="Pfam" id="PF03167">
    <property type="entry name" value="UDG"/>
    <property type="match status" value="1"/>
</dbReference>
<dbReference type="SMART" id="SM00986">
    <property type="entry name" value="UDG"/>
    <property type="match status" value="1"/>
</dbReference>
<dbReference type="SMART" id="SM00987">
    <property type="entry name" value="UreE_C"/>
    <property type="match status" value="1"/>
</dbReference>
<dbReference type="SUPFAM" id="SSF52141">
    <property type="entry name" value="Uracil-DNA glycosylase-like"/>
    <property type="match status" value="1"/>
</dbReference>
<dbReference type="PROSITE" id="PS00130">
    <property type="entry name" value="U_DNA_GLYCOSYLASE"/>
    <property type="match status" value="1"/>
</dbReference>
<proteinExistence type="inferred from homology"/>
<gene>
    <name evidence="1" type="primary">ung</name>
    <name type="ordered locus">NMB1222</name>
</gene>
<evidence type="ECO:0000255" key="1">
    <source>
        <dbReference type="HAMAP-Rule" id="MF_00148"/>
    </source>
</evidence>
<sequence>MDTWHDALGGEKQQPYFQEILNAVRQERLSGQIIYPPAADVFNAFRLTAFDRVKAVILGQDPYHGAGQAHGLAFSVRQGIRIPPSLLNIYKELETDIEGFSIPAHGCLTAWAEQGVLLLNTVLTVRAGQAHSHALLGWERFTDTVIRQLATHRKHLVFMLWGGYAQQKGRLIDSQNHLILTAPHPSPLSAYRGFFGCRHFSQANSYLSRHGIDPINWKL</sequence>
<comment type="function">
    <text evidence="1">Excises uracil residues from the DNA which can arise as a result of misincorporation of dUMP residues by DNA polymerase or due to deamination of cytosine.</text>
</comment>
<comment type="catalytic activity">
    <reaction evidence="1">
        <text>Hydrolyzes single-stranded DNA or mismatched double-stranded DNA and polynucleotides, releasing free uracil.</text>
        <dbReference type="EC" id="3.2.2.27"/>
    </reaction>
</comment>
<comment type="subcellular location">
    <subcellularLocation>
        <location evidence="1">Cytoplasm</location>
    </subcellularLocation>
</comment>
<comment type="similarity">
    <text evidence="1">Belongs to the uracil-DNA glycosylase (UDG) superfamily. UNG family.</text>
</comment>
<name>UNG_NEIMB</name>
<protein>
    <recommendedName>
        <fullName evidence="1">Uracil-DNA glycosylase</fullName>
        <shortName evidence="1">UDG</shortName>
        <ecNumber evidence="1">3.2.2.27</ecNumber>
    </recommendedName>
</protein>
<reference key="1">
    <citation type="journal article" date="2000" name="Science">
        <title>Complete genome sequence of Neisseria meningitidis serogroup B strain MC58.</title>
        <authorList>
            <person name="Tettelin H."/>
            <person name="Saunders N.J."/>
            <person name="Heidelberg J.F."/>
            <person name="Jeffries A.C."/>
            <person name="Nelson K.E."/>
            <person name="Eisen J.A."/>
            <person name="Ketchum K.A."/>
            <person name="Hood D.W."/>
            <person name="Peden J.F."/>
            <person name="Dodson R.J."/>
            <person name="Nelson W.C."/>
            <person name="Gwinn M.L."/>
            <person name="DeBoy R.T."/>
            <person name="Peterson J.D."/>
            <person name="Hickey E.K."/>
            <person name="Haft D.H."/>
            <person name="Salzberg S.L."/>
            <person name="White O."/>
            <person name="Fleischmann R.D."/>
            <person name="Dougherty B.A."/>
            <person name="Mason T.M."/>
            <person name="Ciecko A."/>
            <person name="Parksey D.S."/>
            <person name="Blair E."/>
            <person name="Cittone H."/>
            <person name="Clark E.B."/>
            <person name="Cotton M.D."/>
            <person name="Utterback T.R."/>
            <person name="Khouri H.M."/>
            <person name="Qin H."/>
            <person name="Vamathevan J.J."/>
            <person name="Gill J."/>
            <person name="Scarlato V."/>
            <person name="Masignani V."/>
            <person name="Pizza M."/>
            <person name="Grandi G."/>
            <person name="Sun L."/>
            <person name="Smith H.O."/>
            <person name="Fraser C.M."/>
            <person name="Moxon E.R."/>
            <person name="Rappuoli R."/>
            <person name="Venter J.C."/>
        </authorList>
    </citation>
    <scope>NUCLEOTIDE SEQUENCE [LARGE SCALE GENOMIC DNA]</scope>
    <source>
        <strain>ATCC BAA-335 / MC58</strain>
    </source>
</reference>
<keyword id="KW-0963">Cytoplasm</keyword>
<keyword id="KW-0227">DNA damage</keyword>
<keyword id="KW-0234">DNA repair</keyword>
<keyword id="KW-0378">Hydrolase</keyword>
<keyword id="KW-1185">Reference proteome</keyword>
<organism>
    <name type="scientific">Neisseria meningitidis serogroup B (strain ATCC BAA-335 / MC58)</name>
    <dbReference type="NCBI Taxonomy" id="122586"/>
    <lineage>
        <taxon>Bacteria</taxon>
        <taxon>Pseudomonadati</taxon>
        <taxon>Pseudomonadota</taxon>
        <taxon>Betaproteobacteria</taxon>
        <taxon>Neisseriales</taxon>
        <taxon>Neisseriaceae</taxon>
        <taxon>Neisseria</taxon>
    </lineage>
</organism>
<accession>Q9JZA1</accession>